<accession>A6WS64</accession>
<sequence length="238" mass="26302">MAFTFKQFHIDDMNCGMAVGTDSVVLGAWAQLTAAKTVLDIGAGSGLLSLMAAQRSQAHITSVELDTSAAEACQHNFHNSPWANRLTLVNSSIQDFCQQIEYQEYFDHIICNPPYFEQGTQAIQSQRAMARHTDSLSFTALLDAIHVCLAPQGNASLILPMQSMARFNEILAHSQLSLIEITNLISIVGKSANRVLCVLAHKTHPQIAPKSSDITIRELSGQYTQTMVQLIRDFYLKY</sequence>
<keyword id="KW-0963">Cytoplasm</keyword>
<keyword id="KW-0489">Methyltransferase</keyword>
<keyword id="KW-0949">S-adenosyl-L-methionine</keyword>
<keyword id="KW-0808">Transferase</keyword>
<keyword id="KW-0819">tRNA processing</keyword>
<proteinExistence type="inferred from homology"/>
<feature type="chain" id="PRO_0000387416" description="tRNA1(Val) (adenine(37)-N6)-methyltransferase">
    <location>
        <begin position="1"/>
        <end position="238"/>
    </location>
</feature>
<comment type="function">
    <text evidence="1">Specifically methylates the adenine in position 37 of tRNA(1)(Val) (anticodon cmo5UAC).</text>
</comment>
<comment type="catalytic activity">
    <reaction evidence="1">
        <text>adenosine(37) in tRNA1(Val) + S-adenosyl-L-methionine = N(6)-methyladenosine(37) in tRNA1(Val) + S-adenosyl-L-homocysteine + H(+)</text>
        <dbReference type="Rhea" id="RHEA:43160"/>
        <dbReference type="Rhea" id="RHEA-COMP:10369"/>
        <dbReference type="Rhea" id="RHEA-COMP:10370"/>
        <dbReference type="ChEBI" id="CHEBI:15378"/>
        <dbReference type="ChEBI" id="CHEBI:57856"/>
        <dbReference type="ChEBI" id="CHEBI:59789"/>
        <dbReference type="ChEBI" id="CHEBI:74411"/>
        <dbReference type="ChEBI" id="CHEBI:74449"/>
        <dbReference type="EC" id="2.1.1.223"/>
    </reaction>
</comment>
<comment type="subcellular location">
    <subcellularLocation>
        <location evidence="1">Cytoplasm</location>
    </subcellularLocation>
</comment>
<comment type="similarity">
    <text evidence="1">Belongs to the methyltransferase superfamily. tRNA (adenine-N(6)-)-methyltransferase family.</text>
</comment>
<reference key="1">
    <citation type="submission" date="2007-07" db="EMBL/GenBank/DDBJ databases">
        <title>Complete sequence of chromosome of Shewanella baltica OS185.</title>
        <authorList>
            <consortium name="US DOE Joint Genome Institute"/>
            <person name="Copeland A."/>
            <person name="Lucas S."/>
            <person name="Lapidus A."/>
            <person name="Barry K."/>
            <person name="Glavina del Rio T."/>
            <person name="Dalin E."/>
            <person name="Tice H."/>
            <person name="Pitluck S."/>
            <person name="Sims D."/>
            <person name="Brettin T."/>
            <person name="Bruce D."/>
            <person name="Detter J.C."/>
            <person name="Han C."/>
            <person name="Schmutz J."/>
            <person name="Larimer F."/>
            <person name="Land M."/>
            <person name="Hauser L."/>
            <person name="Kyrpides N."/>
            <person name="Mikhailova N."/>
            <person name="Brettar I."/>
            <person name="Rodrigues J."/>
            <person name="Konstantinidis K."/>
            <person name="Tiedje J."/>
            <person name="Richardson P."/>
        </authorList>
    </citation>
    <scope>NUCLEOTIDE SEQUENCE [LARGE SCALE GENOMIC DNA]</scope>
    <source>
        <strain>OS185</strain>
    </source>
</reference>
<protein>
    <recommendedName>
        <fullName evidence="1">tRNA1(Val) (adenine(37)-N6)-methyltransferase</fullName>
        <ecNumber evidence="1">2.1.1.223</ecNumber>
    </recommendedName>
    <alternativeName>
        <fullName evidence="1">tRNA m6A37 methyltransferase</fullName>
    </alternativeName>
</protein>
<evidence type="ECO:0000255" key="1">
    <source>
        <dbReference type="HAMAP-Rule" id="MF_01872"/>
    </source>
</evidence>
<gene>
    <name type="ordered locus">Shew185_3526</name>
</gene>
<dbReference type="EC" id="2.1.1.223" evidence="1"/>
<dbReference type="EMBL" id="CP000753">
    <property type="protein sequence ID" value="ABS09653.1"/>
    <property type="molecule type" value="Genomic_DNA"/>
</dbReference>
<dbReference type="RefSeq" id="WP_012090096.1">
    <property type="nucleotide sequence ID" value="NC_009665.1"/>
</dbReference>
<dbReference type="SMR" id="A6WS64"/>
<dbReference type="KEGG" id="sbm:Shew185_3526"/>
<dbReference type="HOGENOM" id="CLU_061983_0_0_6"/>
<dbReference type="GO" id="GO:0005737">
    <property type="term" value="C:cytoplasm"/>
    <property type="evidence" value="ECO:0007669"/>
    <property type="project" value="UniProtKB-SubCell"/>
</dbReference>
<dbReference type="GO" id="GO:0003676">
    <property type="term" value="F:nucleic acid binding"/>
    <property type="evidence" value="ECO:0007669"/>
    <property type="project" value="InterPro"/>
</dbReference>
<dbReference type="GO" id="GO:0000179">
    <property type="term" value="F:rRNA (adenine-N6,N6-)-dimethyltransferase activity"/>
    <property type="evidence" value="ECO:0007669"/>
    <property type="project" value="InterPro"/>
</dbReference>
<dbReference type="GO" id="GO:0016430">
    <property type="term" value="F:tRNA (adenine-N6)-methyltransferase activity"/>
    <property type="evidence" value="ECO:0007669"/>
    <property type="project" value="UniProtKB-UniRule"/>
</dbReference>
<dbReference type="GO" id="GO:0008033">
    <property type="term" value="P:tRNA processing"/>
    <property type="evidence" value="ECO:0007669"/>
    <property type="project" value="UniProtKB-UniRule"/>
</dbReference>
<dbReference type="CDD" id="cd02440">
    <property type="entry name" value="AdoMet_MTases"/>
    <property type="match status" value="1"/>
</dbReference>
<dbReference type="Gene3D" id="3.40.50.150">
    <property type="entry name" value="Vaccinia Virus protein VP39"/>
    <property type="match status" value="1"/>
</dbReference>
<dbReference type="HAMAP" id="MF_01872">
    <property type="entry name" value="tRNA_methyltr_YfiC"/>
    <property type="match status" value="1"/>
</dbReference>
<dbReference type="InterPro" id="IPR002052">
    <property type="entry name" value="DNA_methylase_N6_adenine_CS"/>
</dbReference>
<dbReference type="InterPro" id="IPR020596">
    <property type="entry name" value="rRNA_Ade_Mease_Trfase_CS"/>
</dbReference>
<dbReference type="InterPro" id="IPR029063">
    <property type="entry name" value="SAM-dependent_MTases_sf"/>
</dbReference>
<dbReference type="InterPro" id="IPR007848">
    <property type="entry name" value="Small_mtfrase_dom"/>
</dbReference>
<dbReference type="InterPro" id="IPR050210">
    <property type="entry name" value="tRNA_Adenine-N(6)_MTase"/>
</dbReference>
<dbReference type="InterPro" id="IPR022882">
    <property type="entry name" value="tRNA_adenine-N6_MeTrfase"/>
</dbReference>
<dbReference type="PANTHER" id="PTHR47739">
    <property type="entry name" value="TRNA1(VAL) (ADENINE(37)-N6)-METHYLTRANSFERASE"/>
    <property type="match status" value="1"/>
</dbReference>
<dbReference type="PANTHER" id="PTHR47739:SF1">
    <property type="entry name" value="TRNA1(VAL) (ADENINE(37)-N6)-METHYLTRANSFERASE"/>
    <property type="match status" value="1"/>
</dbReference>
<dbReference type="Pfam" id="PF05175">
    <property type="entry name" value="MTS"/>
    <property type="match status" value="1"/>
</dbReference>
<dbReference type="SUPFAM" id="SSF53335">
    <property type="entry name" value="S-adenosyl-L-methionine-dependent methyltransferases"/>
    <property type="match status" value="1"/>
</dbReference>
<dbReference type="PROSITE" id="PS00092">
    <property type="entry name" value="N6_MTASE"/>
    <property type="match status" value="1"/>
</dbReference>
<name>TRMN6_SHEB8</name>
<organism>
    <name type="scientific">Shewanella baltica (strain OS185)</name>
    <dbReference type="NCBI Taxonomy" id="402882"/>
    <lineage>
        <taxon>Bacteria</taxon>
        <taxon>Pseudomonadati</taxon>
        <taxon>Pseudomonadota</taxon>
        <taxon>Gammaproteobacteria</taxon>
        <taxon>Alteromonadales</taxon>
        <taxon>Shewanellaceae</taxon>
        <taxon>Shewanella</taxon>
    </lineage>
</organism>